<proteinExistence type="inferred from homology"/>
<reference key="1">
    <citation type="submission" date="2006-08" db="EMBL/GenBank/DDBJ databases">
        <title>Complete sequence of Alkalilimnicola ehrilichei MLHE-1.</title>
        <authorList>
            <person name="Copeland A."/>
            <person name="Lucas S."/>
            <person name="Lapidus A."/>
            <person name="Barry K."/>
            <person name="Detter J.C."/>
            <person name="Glavina del Rio T."/>
            <person name="Hammon N."/>
            <person name="Israni S."/>
            <person name="Dalin E."/>
            <person name="Tice H."/>
            <person name="Pitluck S."/>
            <person name="Sims D."/>
            <person name="Brettin T."/>
            <person name="Bruce D."/>
            <person name="Han C."/>
            <person name="Tapia R."/>
            <person name="Gilna P."/>
            <person name="Schmutz J."/>
            <person name="Larimer F."/>
            <person name="Land M."/>
            <person name="Hauser L."/>
            <person name="Kyrpides N."/>
            <person name="Mikhailova N."/>
            <person name="Oremland R.S."/>
            <person name="Hoeft S.E."/>
            <person name="Switzer-Blum J."/>
            <person name="Kulp T."/>
            <person name="King G."/>
            <person name="Tabita R."/>
            <person name="Witte B."/>
            <person name="Santini J.M."/>
            <person name="Basu P."/>
            <person name="Hollibaugh J.T."/>
            <person name="Xie G."/>
            <person name="Stolz J.F."/>
            <person name="Richardson P."/>
        </authorList>
    </citation>
    <scope>NUCLEOTIDE SEQUENCE [LARGE SCALE GENOMIC DNA]</scope>
    <source>
        <strain>ATCC BAA-1101 / DSM 17681 / MLHE-1</strain>
    </source>
</reference>
<organism>
    <name type="scientific">Alkalilimnicola ehrlichii (strain ATCC BAA-1101 / DSM 17681 / MLHE-1)</name>
    <dbReference type="NCBI Taxonomy" id="187272"/>
    <lineage>
        <taxon>Bacteria</taxon>
        <taxon>Pseudomonadati</taxon>
        <taxon>Pseudomonadota</taxon>
        <taxon>Gammaproteobacteria</taxon>
        <taxon>Chromatiales</taxon>
        <taxon>Ectothiorhodospiraceae</taxon>
        <taxon>Alkalilimnicola</taxon>
    </lineage>
</organism>
<sequence>MENSLWKQCLRRLEQEIPDQQLNTWIRPLQAQEEEDRLRLLAPNRFVLDWVKAHFADRITELLSAQRPDRPPRLELQIGSSAVVAPPRRRQVSVTTPSPSAAADQTPATRSAASNLNSNFTFDTFVEGKSNQLARAASMQVVENPGTAYNPLFLYGGVGLGKTHLMHAVGNAMLRRRPEARVLYLHSERFVADMVKALQHNAINEFKRHYRMVDALLIDDIQFFARKERSQEEFFHTFNALLEGEQQVIMTCDRYPKEVNGLEERLKSRFGWGLTVAIEPPELETRVAILMSKALQEGVDLPHEVAFFIAKRIRSNIRELEGALRRVVANAQFTGQEITVEFTKEALRDLLALQDKLVTIDNIQKTVAEYYKIRVADLLSKRRSRSITRPRQMAMALAKELTSHSLPEIGDAFGGRDHTTVLHACRKVESLCAEDSRIEEDYSNLLRTLST</sequence>
<name>DNAA_ALKEH</name>
<keyword id="KW-0067">ATP-binding</keyword>
<keyword id="KW-0963">Cytoplasm</keyword>
<keyword id="KW-0235">DNA replication</keyword>
<keyword id="KW-0238">DNA-binding</keyword>
<keyword id="KW-0446">Lipid-binding</keyword>
<keyword id="KW-0547">Nucleotide-binding</keyword>
<keyword id="KW-1185">Reference proteome</keyword>
<dbReference type="EMBL" id="CP000453">
    <property type="protein sequence ID" value="ABI55360.1"/>
    <property type="molecule type" value="Genomic_DNA"/>
</dbReference>
<dbReference type="RefSeq" id="WP_011627756.1">
    <property type="nucleotide sequence ID" value="NC_008340.1"/>
</dbReference>
<dbReference type="SMR" id="Q0ACS7"/>
<dbReference type="KEGG" id="aeh:Mlg_0001"/>
<dbReference type="eggNOG" id="COG0593">
    <property type="taxonomic scope" value="Bacteria"/>
</dbReference>
<dbReference type="HOGENOM" id="CLU_026910_0_1_6"/>
<dbReference type="OrthoDB" id="9807019at2"/>
<dbReference type="Proteomes" id="UP000001962">
    <property type="component" value="Chromosome"/>
</dbReference>
<dbReference type="GO" id="GO:0005737">
    <property type="term" value="C:cytoplasm"/>
    <property type="evidence" value="ECO:0007669"/>
    <property type="project" value="UniProtKB-SubCell"/>
</dbReference>
<dbReference type="GO" id="GO:0005886">
    <property type="term" value="C:plasma membrane"/>
    <property type="evidence" value="ECO:0007669"/>
    <property type="project" value="TreeGrafter"/>
</dbReference>
<dbReference type="GO" id="GO:0005524">
    <property type="term" value="F:ATP binding"/>
    <property type="evidence" value="ECO:0007669"/>
    <property type="project" value="UniProtKB-UniRule"/>
</dbReference>
<dbReference type="GO" id="GO:0016887">
    <property type="term" value="F:ATP hydrolysis activity"/>
    <property type="evidence" value="ECO:0007669"/>
    <property type="project" value="InterPro"/>
</dbReference>
<dbReference type="GO" id="GO:0003688">
    <property type="term" value="F:DNA replication origin binding"/>
    <property type="evidence" value="ECO:0007669"/>
    <property type="project" value="UniProtKB-UniRule"/>
</dbReference>
<dbReference type="GO" id="GO:0008289">
    <property type="term" value="F:lipid binding"/>
    <property type="evidence" value="ECO:0007669"/>
    <property type="project" value="UniProtKB-KW"/>
</dbReference>
<dbReference type="GO" id="GO:0006270">
    <property type="term" value="P:DNA replication initiation"/>
    <property type="evidence" value="ECO:0007669"/>
    <property type="project" value="UniProtKB-UniRule"/>
</dbReference>
<dbReference type="GO" id="GO:0006275">
    <property type="term" value="P:regulation of DNA replication"/>
    <property type="evidence" value="ECO:0007669"/>
    <property type="project" value="UniProtKB-UniRule"/>
</dbReference>
<dbReference type="CDD" id="cd00009">
    <property type="entry name" value="AAA"/>
    <property type="match status" value="1"/>
</dbReference>
<dbReference type="CDD" id="cd06571">
    <property type="entry name" value="Bac_DnaA_C"/>
    <property type="match status" value="1"/>
</dbReference>
<dbReference type="FunFam" id="1.10.1750.10:FF:000001">
    <property type="entry name" value="Chromosomal replication initiator protein DnaA"/>
    <property type="match status" value="1"/>
</dbReference>
<dbReference type="FunFam" id="1.10.8.60:FF:000003">
    <property type="entry name" value="Chromosomal replication initiator protein DnaA"/>
    <property type="match status" value="1"/>
</dbReference>
<dbReference type="FunFam" id="3.40.50.300:FF:000103">
    <property type="entry name" value="Chromosomal replication initiator protein DnaA"/>
    <property type="match status" value="1"/>
</dbReference>
<dbReference type="Gene3D" id="1.10.1750.10">
    <property type="match status" value="1"/>
</dbReference>
<dbReference type="Gene3D" id="1.10.8.60">
    <property type="match status" value="1"/>
</dbReference>
<dbReference type="Gene3D" id="3.30.300.180">
    <property type="match status" value="1"/>
</dbReference>
<dbReference type="Gene3D" id="3.40.50.300">
    <property type="entry name" value="P-loop containing nucleotide triphosphate hydrolases"/>
    <property type="match status" value="1"/>
</dbReference>
<dbReference type="HAMAP" id="MF_00377">
    <property type="entry name" value="DnaA_bact"/>
    <property type="match status" value="1"/>
</dbReference>
<dbReference type="InterPro" id="IPR003593">
    <property type="entry name" value="AAA+_ATPase"/>
</dbReference>
<dbReference type="InterPro" id="IPR001957">
    <property type="entry name" value="Chromosome_initiator_DnaA"/>
</dbReference>
<dbReference type="InterPro" id="IPR020591">
    <property type="entry name" value="Chromosome_initiator_DnaA-like"/>
</dbReference>
<dbReference type="InterPro" id="IPR018312">
    <property type="entry name" value="Chromosome_initiator_DnaA_CS"/>
</dbReference>
<dbReference type="InterPro" id="IPR013159">
    <property type="entry name" value="DnaA_C"/>
</dbReference>
<dbReference type="InterPro" id="IPR013317">
    <property type="entry name" value="DnaA_dom"/>
</dbReference>
<dbReference type="InterPro" id="IPR024633">
    <property type="entry name" value="DnaA_N_dom"/>
</dbReference>
<dbReference type="InterPro" id="IPR038454">
    <property type="entry name" value="DnaA_N_sf"/>
</dbReference>
<dbReference type="InterPro" id="IPR027417">
    <property type="entry name" value="P-loop_NTPase"/>
</dbReference>
<dbReference type="InterPro" id="IPR010921">
    <property type="entry name" value="Trp_repressor/repl_initiator"/>
</dbReference>
<dbReference type="NCBIfam" id="TIGR00362">
    <property type="entry name" value="DnaA"/>
    <property type="match status" value="1"/>
</dbReference>
<dbReference type="PANTHER" id="PTHR30050">
    <property type="entry name" value="CHROMOSOMAL REPLICATION INITIATOR PROTEIN DNAA"/>
    <property type="match status" value="1"/>
</dbReference>
<dbReference type="PANTHER" id="PTHR30050:SF2">
    <property type="entry name" value="CHROMOSOMAL REPLICATION INITIATOR PROTEIN DNAA"/>
    <property type="match status" value="1"/>
</dbReference>
<dbReference type="Pfam" id="PF00308">
    <property type="entry name" value="Bac_DnaA"/>
    <property type="match status" value="1"/>
</dbReference>
<dbReference type="Pfam" id="PF08299">
    <property type="entry name" value="Bac_DnaA_C"/>
    <property type="match status" value="1"/>
</dbReference>
<dbReference type="Pfam" id="PF11638">
    <property type="entry name" value="DnaA_N"/>
    <property type="match status" value="1"/>
</dbReference>
<dbReference type="PRINTS" id="PR00051">
    <property type="entry name" value="DNAA"/>
</dbReference>
<dbReference type="SMART" id="SM00382">
    <property type="entry name" value="AAA"/>
    <property type="match status" value="1"/>
</dbReference>
<dbReference type="SMART" id="SM00760">
    <property type="entry name" value="Bac_DnaA_C"/>
    <property type="match status" value="1"/>
</dbReference>
<dbReference type="SUPFAM" id="SSF52540">
    <property type="entry name" value="P-loop containing nucleoside triphosphate hydrolases"/>
    <property type="match status" value="1"/>
</dbReference>
<dbReference type="SUPFAM" id="SSF48295">
    <property type="entry name" value="TrpR-like"/>
    <property type="match status" value="1"/>
</dbReference>
<dbReference type="PROSITE" id="PS01008">
    <property type="entry name" value="DNAA"/>
    <property type="match status" value="1"/>
</dbReference>
<comment type="function">
    <text evidence="1">Plays an essential role in the initiation and regulation of chromosomal replication. ATP-DnaA binds to the origin of replication (oriC) to initiate formation of the DNA replication initiation complex once per cell cycle. Binds the DnaA box (a 9 base pair repeat at the origin) and separates the double-stranded (ds)DNA. Forms a right-handed helical filament on oriC DNA; dsDNA binds to the exterior of the filament while single-stranded (ss)DNA is stabiized in the filament's interior. The ATP-DnaA-oriC complex binds and stabilizes one strand of the AT-rich DNA unwinding element (DUE), permitting loading of DNA polymerase. After initiation quickly degrades to an ADP-DnaA complex that is not apt for DNA replication. Binds acidic phospholipids.</text>
</comment>
<comment type="subunit">
    <text evidence="1">Oligomerizes as a right-handed, spiral filament on DNA at oriC.</text>
</comment>
<comment type="subcellular location">
    <subcellularLocation>
        <location evidence="1">Cytoplasm</location>
    </subcellularLocation>
</comment>
<comment type="domain">
    <text evidence="1">Domain I is involved in oligomerization and binding regulators, domain II is flexibile and of varying length in different bacteria, domain III forms the AAA+ region, while domain IV binds dsDNA.</text>
</comment>
<comment type="similarity">
    <text evidence="1">Belongs to the DnaA family.</text>
</comment>
<feature type="chain" id="PRO_1000048602" description="Chromosomal replication initiator protein DnaA">
    <location>
        <begin position="1"/>
        <end position="451"/>
    </location>
</feature>
<feature type="region of interest" description="Domain I, interacts with DnaA modulators" evidence="1">
    <location>
        <begin position="1"/>
        <end position="82"/>
    </location>
</feature>
<feature type="region of interest" description="Domain II" evidence="1">
    <location>
        <begin position="82"/>
        <end position="114"/>
    </location>
</feature>
<feature type="region of interest" description="Disordered" evidence="2">
    <location>
        <begin position="85"/>
        <end position="112"/>
    </location>
</feature>
<feature type="region of interest" description="Domain III, AAA+ region" evidence="1">
    <location>
        <begin position="115"/>
        <end position="331"/>
    </location>
</feature>
<feature type="region of interest" description="Domain IV, binds dsDNA" evidence="1">
    <location>
        <begin position="332"/>
        <end position="451"/>
    </location>
</feature>
<feature type="binding site" evidence="1">
    <location>
        <position position="159"/>
    </location>
    <ligand>
        <name>ATP</name>
        <dbReference type="ChEBI" id="CHEBI:30616"/>
    </ligand>
</feature>
<feature type="binding site" evidence="1">
    <location>
        <position position="161"/>
    </location>
    <ligand>
        <name>ATP</name>
        <dbReference type="ChEBI" id="CHEBI:30616"/>
    </ligand>
</feature>
<feature type="binding site" evidence="1">
    <location>
        <position position="162"/>
    </location>
    <ligand>
        <name>ATP</name>
        <dbReference type="ChEBI" id="CHEBI:30616"/>
    </ligand>
</feature>
<feature type="binding site" evidence="1">
    <location>
        <position position="163"/>
    </location>
    <ligand>
        <name>ATP</name>
        <dbReference type="ChEBI" id="CHEBI:30616"/>
    </ligand>
</feature>
<gene>
    <name evidence="1" type="primary">dnaA</name>
    <name type="ordered locus">Mlg_0001</name>
</gene>
<protein>
    <recommendedName>
        <fullName evidence="1">Chromosomal replication initiator protein DnaA</fullName>
    </recommendedName>
</protein>
<evidence type="ECO:0000255" key="1">
    <source>
        <dbReference type="HAMAP-Rule" id="MF_00377"/>
    </source>
</evidence>
<evidence type="ECO:0000256" key="2">
    <source>
        <dbReference type="SAM" id="MobiDB-lite"/>
    </source>
</evidence>
<accession>Q0ACS7</accession>